<sequence>MNRGALIKLVESRYVRTDLPEFRPGDTVRVSYKVKEGNRTRIQDFEGIVIRIRRNGFNTTFTVRKVSYGVGVERIFPLHSPLIQKIDIVQRGRARRAKLYFIRNLSDREIRRKLRADRKRIDQDRAAERAAKEEAQKAQEPKASQE</sequence>
<comment type="function">
    <text>Contacts the 16S rRNA of the 30S subunit (part of bridge B6), connecting the 2 subunits.</text>
</comment>
<comment type="subunit">
    <text>Part of the 50S risobomal subunit. Contacts protein L14. Forms a bridge to the 30S subunit in the 70S ribosome, contacting the 16S rRNA.</text>
</comment>
<comment type="mass spectrometry"/>
<comment type="similarity">
    <text evidence="3">Belongs to the bacterial ribosomal protein bL19 family.</text>
</comment>
<name>RL19_THET8</name>
<protein>
    <recommendedName>
        <fullName evidence="3">Large ribosomal subunit protein bL19</fullName>
    </recommendedName>
    <alternativeName>
        <fullName>50S ribosomal protein L19</fullName>
    </alternativeName>
</protein>
<proteinExistence type="evidence at protein level"/>
<organism>
    <name type="scientific">Thermus thermophilus (strain ATCC 27634 / DSM 579 / HB8)</name>
    <dbReference type="NCBI Taxonomy" id="300852"/>
    <lineage>
        <taxon>Bacteria</taxon>
        <taxon>Thermotogati</taxon>
        <taxon>Deinococcota</taxon>
        <taxon>Deinococci</taxon>
        <taxon>Thermales</taxon>
        <taxon>Thermaceae</taxon>
        <taxon>Thermus</taxon>
    </lineage>
</organism>
<accession>P60490</accession>
<accession>Q5SJH7</accession>
<gene>
    <name type="primary">rplS</name>
    <name type="ordered locus">TTHA1031</name>
</gene>
<feature type="chain" id="PRO_0000163558" description="Large ribosomal subunit protein bL19">
    <location>
        <begin position="1"/>
        <end position="146"/>
    </location>
</feature>
<feature type="region of interest" description="Disordered" evidence="1">
    <location>
        <begin position="116"/>
        <end position="146"/>
    </location>
</feature>
<feature type="compositionally biased region" description="Basic and acidic residues" evidence="1">
    <location>
        <begin position="119"/>
        <end position="146"/>
    </location>
</feature>
<feature type="helix" evidence="4">
    <location>
        <begin position="4"/>
        <end position="11"/>
    </location>
</feature>
<feature type="strand" evidence="4">
    <location>
        <begin position="48"/>
        <end position="53"/>
    </location>
</feature>
<feature type="strand" evidence="4">
    <location>
        <begin position="56"/>
        <end position="58"/>
    </location>
</feature>
<feature type="strand" evidence="4">
    <location>
        <begin position="60"/>
        <end position="67"/>
    </location>
</feature>
<feature type="strand" evidence="4">
    <location>
        <begin position="70"/>
        <end position="76"/>
    </location>
</feature>
<feature type="strand" evidence="4">
    <location>
        <begin position="78"/>
        <end position="81"/>
    </location>
</feature>
<feature type="strand" evidence="4">
    <location>
        <begin position="95"/>
        <end position="97"/>
    </location>
</feature>
<feature type="helix" evidence="4">
    <location>
        <begin position="100"/>
        <end position="105"/>
    </location>
</feature>
<feature type="helix" evidence="4">
    <location>
        <begin position="109"/>
        <end position="113"/>
    </location>
</feature>
<feature type="helix" evidence="4">
    <location>
        <begin position="118"/>
        <end position="125"/>
    </location>
</feature>
<feature type="helix" evidence="4">
    <location>
        <begin position="126"/>
        <end position="128"/>
    </location>
</feature>
<feature type="turn" evidence="4">
    <location>
        <begin position="134"/>
        <end position="136"/>
    </location>
</feature>
<evidence type="ECO:0000256" key="1">
    <source>
        <dbReference type="SAM" id="MobiDB-lite"/>
    </source>
</evidence>
<evidence type="ECO:0000269" key="2">
    <source>
    </source>
</evidence>
<evidence type="ECO:0000305" key="3"/>
<evidence type="ECO:0007829" key="4">
    <source>
        <dbReference type="PDB" id="4WT8"/>
    </source>
</evidence>
<dbReference type="EMBL" id="AP008226">
    <property type="protein sequence ID" value="BAD70854.1"/>
    <property type="molecule type" value="Genomic_DNA"/>
</dbReference>
<dbReference type="RefSeq" id="WP_011228391.1">
    <property type="nucleotide sequence ID" value="NC_006461.1"/>
</dbReference>
<dbReference type="RefSeq" id="YP_144297.1">
    <property type="nucleotide sequence ID" value="NC_006461.1"/>
</dbReference>
<dbReference type="PDB" id="1VVJ">
    <property type="method" value="X-ray"/>
    <property type="resolution" value="3.44 A"/>
    <property type="chains" value="RT/YT=1-146"/>
</dbReference>
<dbReference type="PDB" id="1VY4">
    <property type="method" value="X-ray"/>
    <property type="resolution" value="2.60 A"/>
    <property type="chains" value="BT/DT=1-146"/>
</dbReference>
<dbReference type="PDB" id="1VY5">
    <property type="method" value="X-ray"/>
    <property type="resolution" value="2.55 A"/>
    <property type="chains" value="BT/DT=1-146"/>
</dbReference>
<dbReference type="PDB" id="1VY6">
    <property type="method" value="X-ray"/>
    <property type="resolution" value="2.90 A"/>
    <property type="chains" value="BT/DT=1-146"/>
</dbReference>
<dbReference type="PDB" id="1VY7">
    <property type="method" value="X-ray"/>
    <property type="resolution" value="2.80 A"/>
    <property type="chains" value="BT/DT=1-146"/>
</dbReference>
<dbReference type="PDB" id="4L47">
    <property type="method" value="X-ray"/>
    <property type="resolution" value="3.22 A"/>
    <property type="chains" value="RT/YT=1-146"/>
</dbReference>
<dbReference type="PDB" id="4L71">
    <property type="method" value="X-ray"/>
    <property type="resolution" value="3.90 A"/>
    <property type="chains" value="RT/YT=1-146"/>
</dbReference>
<dbReference type="PDB" id="4LEL">
    <property type="method" value="X-ray"/>
    <property type="resolution" value="3.90 A"/>
    <property type="chains" value="RT/YT=1-146"/>
</dbReference>
<dbReference type="PDB" id="4LFZ">
    <property type="method" value="X-ray"/>
    <property type="resolution" value="3.92 A"/>
    <property type="chains" value="RT/YT=1-146"/>
</dbReference>
<dbReference type="PDB" id="4LNT">
    <property type="method" value="X-ray"/>
    <property type="resolution" value="2.94 A"/>
    <property type="chains" value="RT/YT=1-146"/>
</dbReference>
<dbReference type="PDB" id="4LSK">
    <property type="method" value="X-ray"/>
    <property type="resolution" value="3.48 A"/>
    <property type="chains" value="RT/YT=1-146"/>
</dbReference>
<dbReference type="PDB" id="4LT8">
    <property type="method" value="X-ray"/>
    <property type="resolution" value="3.14 A"/>
    <property type="chains" value="RT/YT=1-146"/>
</dbReference>
<dbReference type="PDB" id="4P6F">
    <property type="method" value="X-ray"/>
    <property type="resolution" value="3.60 A"/>
    <property type="chains" value="RT/YT=1-146"/>
</dbReference>
<dbReference type="PDB" id="4P70">
    <property type="method" value="X-ray"/>
    <property type="resolution" value="3.68 A"/>
    <property type="chains" value="RT/YT=1-146"/>
</dbReference>
<dbReference type="PDB" id="4TUA">
    <property type="method" value="X-ray"/>
    <property type="resolution" value="3.60 A"/>
    <property type="chains" value="RT/YT=1-146"/>
</dbReference>
<dbReference type="PDB" id="4TUB">
    <property type="method" value="X-ray"/>
    <property type="resolution" value="3.60 A"/>
    <property type="chains" value="RT/YT=1-146"/>
</dbReference>
<dbReference type="PDB" id="4TUC">
    <property type="method" value="X-ray"/>
    <property type="resolution" value="3.60 A"/>
    <property type="chains" value="RT/YT=1-146"/>
</dbReference>
<dbReference type="PDB" id="4TUD">
    <property type="method" value="X-ray"/>
    <property type="resolution" value="3.60 A"/>
    <property type="chains" value="RT/YT=1-146"/>
</dbReference>
<dbReference type="PDB" id="4TUE">
    <property type="method" value="X-ray"/>
    <property type="resolution" value="3.50 A"/>
    <property type="chains" value="RT/YT=1-146"/>
</dbReference>
<dbReference type="PDB" id="4V42">
    <property type="method" value="X-ray"/>
    <property type="resolution" value="5.50 A"/>
    <property type="chains" value="R=1-146"/>
</dbReference>
<dbReference type="PDB" id="4V4P">
    <property type="method" value="X-ray"/>
    <property type="resolution" value="5.50 A"/>
    <property type="chains" value="R=1-146"/>
</dbReference>
<dbReference type="PDB" id="4V4X">
    <property type="method" value="X-ray"/>
    <property type="resolution" value="5.00 A"/>
    <property type="chains" value="BS=1-146"/>
</dbReference>
<dbReference type="PDB" id="4V4Y">
    <property type="method" value="X-ray"/>
    <property type="resolution" value="5.50 A"/>
    <property type="chains" value="BS=1-146"/>
</dbReference>
<dbReference type="PDB" id="4V4Z">
    <property type="method" value="X-ray"/>
    <property type="resolution" value="4.51 A"/>
    <property type="chains" value="BS=1-146"/>
</dbReference>
<dbReference type="PDB" id="4V51">
    <property type="method" value="X-ray"/>
    <property type="resolution" value="2.80 A"/>
    <property type="chains" value="BT/DT=1-146"/>
</dbReference>
<dbReference type="PDB" id="4V5A">
    <property type="method" value="X-ray"/>
    <property type="resolution" value="3.50 A"/>
    <property type="chains" value="BT/DT=1-146"/>
</dbReference>
<dbReference type="PDB" id="4V5C">
    <property type="method" value="X-ray"/>
    <property type="resolution" value="3.30 A"/>
    <property type="chains" value="BT/DT=1-146"/>
</dbReference>
<dbReference type="PDB" id="4V5D">
    <property type="method" value="X-ray"/>
    <property type="resolution" value="3.50 A"/>
    <property type="chains" value="BT/DT=1-146"/>
</dbReference>
<dbReference type="PDB" id="4V5E">
    <property type="method" value="X-ray"/>
    <property type="resolution" value="3.45 A"/>
    <property type="chains" value="BT/DT=1-146"/>
</dbReference>
<dbReference type="PDB" id="4V5F">
    <property type="method" value="X-ray"/>
    <property type="resolution" value="3.60 A"/>
    <property type="chains" value="BT/DT=1-146"/>
</dbReference>
<dbReference type="PDB" id="4V5G">
    <property type="method" value="X-ray"/>
    <property type="resolution" value="3.60 A"/>
    <property type="chains" value="BT/DT=1-146"/>
</dbReference>
<dbReference type="PDB" id="4V5J">
    <property type="method" value="X-ray"/>
    <property type="resolution" value="3.10 A"/>
    <property type="chains" value="BT/DT=1-146"/>
</dbReference>
<dbReference type="PDB" id="4V5K">
    <property type="method" value="X-ray"/>
    <property type="resolution" value="3.20 A"/>
    <property type="chains" value="BT/DT=1-146"/>
</dbReference>
<dbReference type="PDB" id="4V5L">
    <property type="method" value="X-ray"/>
    <property type="resolution" value="3.10 A"/>
    <property type="chains" value="BT=1-146"/>
</dbReference>
<dbReference type="PDB" id="4V5M">
    <property type="method" value="EM"/>
    <property type="resolution" value="7.80 A"/>
    <property type="chains" value="BT=1-146"/>
</dbReference>
<dbReference type="PDB" id="4V5N">
    <property type="method" value="EM"/>
    <property type="resolution" value="7.60 A"/>
    <property type="chains" value="BT=1-146"/>
</dbReference>
<dbReference type="PDB" id="4V5P">
    <property type="method" value="X-ray"/>
    <property type="resolution" value="3.10 A"/>
    <property type="chains" value="BT/DT=1-146"/>
</dbReference>
<dbReference type="PDB" id="4V5Q">
    <property type="method" value="X-ray"/>
    <property type="resolution" value="3.10 A"/>
    <property type="chains" value="BT/DT=1-146"/>
</dbReference>
<dbReference type="PDB" id="4V5R">
    <property type="method" value="X-ray"/>
    <property type="resolution" value="3.10 A"/>
    <property type="chains" value="BT/DT=1-146"/>
</dbReference>
<dbReference type="PDB" id="4V5S">
    <property type="method" value="X-ray"/>
    <property type="resolution" value="3.10 A"/>
    <property type="chains" value="BT/DT=1-146"/>
</dbReference>
<dbReference type="PDB" id="4V68">
    <property type="method" value="EM"/>
    <property type="resolution" value="6.40 A"/>
    <property type="chains" value="BT=1-138"/>
</dbReference>
<dbReference type="PDB" id="4V6A">
    <property type="method" value="X-ray"/>
    <property type="resolution" value="3.10 A"/>
    <property type="chains" value="BT/DT=1-146"/>
</dbReference>
<dbReference type="PDB" id="4V6F">
    <property type="method" value="X-ray"/>
    <property type="resolution" value="3.10 A"/>
    <property type="chains" value="AR/DR=1-146"/>
</dbReference>
<dbReference type="PDB" id="4V6G">
    <property type="method" value="X-ray"/>
    <property type="resolution" value="3.50 A"/>
    <property type="chains" value="BR/DR=1-146"/>
</dbReference>
<dbReference type="PDB" id="4V7J">
    <property type="method" value="X-ray"/>
    <property type="resolution" value="3.30 A"/>
    <property type="chains" value="AT/BT=1-146"/>
</dbReference>
<dbReference type="PDB" id="4V7K">
    <property type="method" value="X-ray"/>
    <property type="resolution" value="3.60 A"/>
    <property type="chains" value="AT/BT=1-146"/>
</dbReference>
<dbReference type="PDB" id="4V7L">
    <property type="method" value="X-ray"/>
    <property type="resolution" value="3.00 A"/>
    <property type="chains" value="BT/DT=1-146"/>
</dbReference>
<dbReference type="PDB" id="4V7M">
    <property type="method" value="X-ray"/>
    <property type="resolution" value="3.45 A"/>
    <property type="chains" value="BT/DT=1-146"/>
</dbReference>
<dbReference type="PDB" id="4V7W">
    <property type="method" value="X-ray"/>
    <property type="resolution" value="3.00 A"/>
    <property type="chains" value="BT/DT=1-146"/>
</dbReference>
<dbReference type="PDB" id="4V7X">
    <property type="method" value="X-ray"/>
    <property type="resolution" value="3.00 A"/>
    <property type="chains" value="BT/DT=1-146"/>
</dbReference>
<dbReference type="PDB" id="4V7Y">
    <property type="method" value="X-ray"/>
    <property type="resolution" value="3.00 A"/>
    <property type="chains" value="BT/DT=1-146"/>
</dbReference>
<dbReference type="PDB" id="4V7Z">
    <property type="method" value="X-ray"/>
    <property type="resolution" value="3.10 A"/>
    <property type="chains" value="BT/DT=1-146"/>
</dbReference>
<dbReference type="PDB" id="4V87">
    <property type="method" value="X-ray"/>
    <property type="resolution" value="3.10 A"/>
    <property type="chains" value="AR/DR=1-137"/>
</dbReference>
<dbReference type="PDB" id="4V8A">
    <property type="method" value="X-ray"/>
    <property type="resolution" value="3.20 A"/>
    <property type="chains" value="AT/BT=1-146"/>
</dbReference>
<dbReference type="PDB" id="4V8B">
    <property type="method" value="X-ray"/>
    <property type="resolution" value="3.00 A"/>
    <property type="chains" value="BR/DR=1-146"/>
</dbReference>
<dbReference type="PDB" id="4V8C">
    <property type="method" value="X-ray"/>
    <property type="resolution" value="3.30 A"/>
    <property type="chains" value="AR/BR=1-146"/>
</dbReference>
<dbReference type="PDB" id="4V8D">
    <property type="method" value="X-ray"/>
    <property type="resolution" value="3.00 A"/>
    <property type="chains" value="BR/DR=1-146"/>
</dbReference>
<dbReference type="PDB" id="4V8E">
    <property type="method" value="X-ray"/>
    <property type="resolution" value="3.30 A"/>
    <property type="chains" value="AR/CR=1-146"/>
</dbReference>
<dbReference type="PDB" id="4V8F">
    <property type="method" value="X-ray"/>
    <property type="resolution" value="3.30 A"/>
    <property type="chains" value="AR/DR=1-146"/>
</dbReference>
<dbReference type="PDB" id="4V8G">
    <property type="method" value="X-ray"/>
    <property type="resolution" value="3.00 A"/>
    <property type="chains" value="BT/DT=1-146"/>
</dbReference>
<dbReference type="PDB" id="4V8H">
    <property type="method" value="X-ray"/>
    <property type="resolution" value="3.10 A"/>
    <property type="chains" value="BT/DT=1-146"/>
</dbReference>
<dbReference type="PDB" id="4V8I">
    <property type="method" value="X-ray"/>
    <property type="resolution" value="2.70 A"/>
    <property type="chains" value="BT/DT=1-146"/>
</dbReference>
<dbReference type="PDB" id="4V8J">
    <property type="method" value="X-ray"/>
    <property type="resolution" value="3.90 A"/>
    <property type="chains" value="BT/DT=1-146"/>
</dbReference>
<dbReference type="PDB" id="4V8N">
    <property type="method" value="X-ray"/>
    <property type="resolution" value="3.10 A"/>
    <property type="chains" value="BT/DT=1-146"/>
</dbReference>
<dbReference type="PDB" id="4V8O">
    <property type="method" value="X-ray"/>
    <property type="resolution" value="3.80 A"/>
    <property type="chains" value="BT=1-146"/>
</dbReference>
<dbReference type="PDB" id="4V8Q">
    <property type="method" value="X-ray"/>
    <property type="resolution" value="3.10 A"/>
    <property type="chains" value="AT=1-146"/>
</dbReference>
<dbReference type="PDB" id="4V8U">
    <property type="method" value="X-ray"/>
    <property type="resolution" value="3.70 A"/>
    <property type="chains" value="BT/DT=1-146"/>
</dbReference>
<dbReference type="PDB" id="4V8X">
    <property type="method" value="X-ray"/>
    <property type="resolution" value="3.35 A"/>
    <property type="chains" value="BT/DT=1-146"/>
</dbReference>
<dbReference type="PDB" id="4V90">
    <property type="method" value="X-ray"/>
    <property type="resolution" value="2.95 A"/>
    <property type="chains" value="BT=1-146"/>
</dbReference>
<dbReference type="PDB" id="4V95">
    <property type="method" value="X-ray"/>
    <property type="resolution" value="3.20 A"/>
    <property type="chains" value="BT/DT=1-146"/>
</dbReference>
<dbReference type="PDB" id="4V97">
    <property type="method" value="X-ray"/>
    <property type="resolution" value="3.52 A"/>
    <property type="chains" value="BT/DT=1-146"/>
</dbReference>
<dbReference type="PDB" id="4V9A">
    <property type="method" value="X-ray"/>
    <property type="resolution" value="3.30 A"/>
    <property type="chains" value="BR/DR=1-146"/>
</dbReference>
<dbReference type="PDB" id="4V9B">
    <property type="method" value="X-ray"/>
    <property type="resolution" value="3.10 A"/>
    <property type="chains" value="BR/DR=1-146"/>
</dbReference>
<dbReference type="PDB" id="4V9H">
    <property type="method" value="X-ray"/>
    <property type="resolution" value="2.86 A"/>
    <property type="chains" value="BT=1-146"/>
</dbReference>
<dbReference type="PDB" id="4V9I">
    <property type="method" value="X-ray"/>
    <property type="resolution" value="3.30 A"/>
    <property type="chains" value="BT/DT=1-137"/>
</dbReference>
<dbReference type="PDB" id="4V9R">
    <property type="method" value="X-ray"/>
    <property type="resolution" value="3.00 A"/>
    <property type="chains" value="BT/DT=1-146"/>
</dbReference>
<dbReference type="PDB" id="4V9S">
    <property type="method" value="X-ray"/>
    <property type="resolution" value="3.10 A"/>
    <property type="chains" value="BT/DT=1-146"/>
</dbReference>
<dbReference type="PDB" id="4W2E">
    <property type="method" value="X-ray"/>
    <property type="resolution" value="2.90 A"/>
    <property type="chains" value="T=1-146"/>
</dbReference>
<dbReference type="PDB" id="4W2F">
    <property type="method" value="X-ray"/>
    <property type="resolution" value="2.40 A"/>
    <property type="chains" value="BT/DT=1-146"/>
</dbReference>
<dbReference type="PDB" id="4W2G">
    <property type="method" value="X-ray"/>
    <property type="resolution" value="2.55 A"/>
    <property type="chains" value="BT/DT=1-146"/>
</dbReference>
<dbReference type="PDB" id="4W2H">
    <property type="method" value="X-ray"/>
    <property type="resolution" value="2.70 A"/>
    <property type="chains" value="BT/DT=1-146"/>
</dbReference>
<dbReference type="PDB" id="4W2I">
    <property type="method" value="X-ray"/>
    <property type="resolution" value="2.70 A"/>
    <property type="chains" value="BT/DT=1-146"/>
</dbReference>
<dbReference type="PDB" id="4W4G">
    <property type="method" value="X-ray"/>
    <property type="resolution" value="3.30 A"/>
    <property type="chains" value="RT/YT=1-146"/>
</dbReference>
<dbReference type="PDB" id="4WPO">
    <property type="method" value="X-ray"/>
    <property type="resolution" value="2.80 A"/>
    <property type="chains" value="AT/CT=1-146"/>
</dbReference>
<dbReference type="PDB" id="4WQ1">
    <property type="method" value="X-ray"/>
    <property type="resolution" value="3.10 A"/>
    <property type="chains" value="75/B8=1-137"/>
</dbReference>
<dbReference type="PDB" id="4WQF">
    <property type="method" value="X-ray"/>
    <property type="resolution" value="2.80 A"/>
    <property type="chains" value="AT/CT=1-146"/>
</dbReference>
<dbReference type="PDB" id="4WQR">
    <property type="method" value="X-ray"/>
    <property type="resolution" value="3.15 A"/>
    <property type="chains" value="75/B8=1-146"/>
</dbReference>
<dbReference type="PDB" id="4WQU">
    <property type="method" value="X-ray"/>
    <property type="resolution" value="2.80 A"/>
    <property type="chains" value="AT/CT=1-146"/>
</dbReference>
<dbReference type="PDB" id="4WQY">
    <property type="method" value="X-ray"/>
    <property type="resolution" value="2.80 A"/>
    <property type="chains" value="AT/CT=1-146"/>
</dbReference>
<dbReference type="PDB" id="4WR6">
    <property type="method" value="X-ray"/>
    <property type="resolution" value="3.05 A"/>
    <property type="chains" value="75/B8=1-146"/>
</dbReference>
<dbReference type="PDB" id="4WRA">
    <property type="method" value="X-ray"/>
    <property type="resolution" value="3.05 A"/>
    <property type="chains" value="75/B8=1-146"/>
</dbReference>
<dbReference type="PDB" id="4WRO">
    <property type="method" value="X-ray"/>
    <property type="resolution" value="3.05 A"/>
    <property type="chains" value="B8=1-146"/>
</dbReference>
<dbReference type="PDB" id="4WSD">
    <property type="method" value="X-ray"/>
    <property type="resolution" value="2.95 A"/>
    <property type="chains" value="75/B8=1-146"/>
</dbReference>
<dbReference type="PDB" id="4WSM">
    <property type="method" value="X-ray"/>
    <property type="resolution" value="3.30 A"/>
    <property type="chains" value="75/B8=1-146"/>
</dbReference>
<dbReference type="PDB" id="4WT1">
    <property type="method" value="X-ray"/>
    <property type="resolution" value="3.05 A"/>
    <property type="chains" value="75/B8=1-146"/>
</dbReference>
<dbReference type="PDB" id="4WT8">
    <property type="method" value="X-ray"/>
    <property type="resolution" value="3.40 A"/>
    <property type="chains" value="CS/DS=1-137"/>
</dbReference>
<dbReference type="PDB" id="4WU1">
    <property type="method" value="X-ray"/>
    <property type="resolution" value="3.20 A"/>
    <property type="chains" value="75/B8=1-146"/>
</dbReference>
<dbReference type="PDB" id="4WZD">
    <property type="method" value="X-ray"/>
    <property type="resolution" value="3.10 A"/>
    <property type="chains" value="75/B8=1-146"/>
</dbReference>
<dbReference type="PDB" id="4WZO">
    <property type="method" value="X-ray"/>
    <property type="resolution" value="3.30 A"/>
    <property type="chains" value="75/B8=1-146"/>
</dbReference>
<dbReference type="PDB" id="4Y4O">
    <property type="method" value="X-ray"/>
    <property type="resolution" value="2.30 A"/>
    <property type="chains" value="1T/2T=1-146"/>
</dbReference>
<dbReference type="PDB" id="4Y4P">
    <property type="method" value="X-ray"/>
    <property type="resolution" value="2.50 A"/>
    <property type="chains" value="1T/2T=1-146"/>
</dbReference>
<dbReference type="PDB" id="4YPB">
    <property type="method" value="X-ray"/>
    <property type="resolution" value="3.40 A"/>
    <property type="chains" value="RT/YT=1-146"/>
</dbReference>
<dbReference type="PDB" id="4YZV">
    <property type="method" value="X-ray"/>
    <property type="resolution" value="3.10 A"/>
    <property type="chains" value="RT/YT=1-146"/>
</dbReference>
<dbReference type="PDB" id="4Z3S">
    <property type="method" value="X-ray"/>
    <property type="resolution" value="2.65 A"/>
    <property type="chains" value="1T/2T=1-146"/>
</dbReference>
<dbReference type="PDB" id="4Z8C">
    <property type="method" value="X-ray"/>
    <property type="resolution" value="2.90 A"/>
    <property type="chains" value="1T/2T=1-146"/>
</dbReference>
<dbReference type="PDB" id="4ZER">
    <property type="method" value="X-ray"/>
    <property type="resolution" value="3.10 A"/>
    <property type="chains" value="1T/2T=1-131"/>
</dbReference>
<dbReference type="PDB" id="4ZSN">
    <property type="method" value="X-ray"/>
    <property type="resolution" value="3.60 A"/>
    <property type="chains" value="RT/YT=1-146"/>
</dbReference>
<dbReference type="PDB" id="5A9Z">
    <property type="method" value="EM"/>
    <property type="resolution" value="4.70 A"/>
    <property type="chains" value="AQ=1-117"/>
</dbReference>
<dbReference type="PDB" id="5AA0">
    <property type="method" value="EM"/>
    <property type="resolution" value="5.00 A"/>
    <property type="chains" value="AQ=1-117"/>
</dbReference>
<dbReference type="PDB" id="5CZP">
    <property type="method" value="X-ray"/>
    <property type="resolution" value="3.30 A"/>
    <property type="chains" value="RT/YT=1-146"/>
</dbReference>
<dbReference type="PDB" id="5D8B">
    <property type="method" value="X-ray"/>
    <property type="resolution" value="3.63 A"/>
    <property type="chains" value="JB/N=1-146"/>
</dbReference>
<dbReference type="PDB" id="5DFE">
    <property type="method" value="X-ray"/>
    <property type="resolution" value="3.10 A"/>
    <property type="chains" value="RT/YT=1-146"/>
</dbReference>
<dbReference type="PDB" id="5DOX">
    <property type="method" value="X-ray"/>
    <property type="resolution" value="3.10 A"/>
    <property type="chains" value="1T/2T=1-146"/>
</dbReference>
<dbReference type="PDB" id="5DOY">
    <property type="method" value="X-ray"/>
    <property type="resolution" value="2.60 A"/>
    <property type="chains" value="1T/2T=1-146"/>
</dbReference>
<dbReference type="PDB" id="5E7K">
    <property type="method" value="X-ray"/>
    <property type="resolution" value="3.20 A"/>
    <property type="chains" value="75/B8=1-146"/>
</dbReference>
<dbReference type="PDB" id="5E81">
    <property type="method" value="X-ray"/>
    <property type="resolution" value="2.95 A"/>
    <property type="chains" value="75/B8=1-146"/>
</dbReference>
<dbReference type="PDB" id="5EL4">
    <property type="method" value="X-ray"/>
    <property type="resolution" value="3.15 A"/>
    <property type="chains" value="75/B8=1-146"/>
</dbReference>
<dbReference type="PDB" id="5EL5">
    <property type="method" value="X-ray"/>
    <property type="resolution" value="3.15 A"/>
    <property type="chains" value="75/B8=1-146"/>
</dbReference>
<dbReference type="PDB" id="5EL6">
    <property type="method" value="X-ray"/>
    <property type="resolution" value="3.10 A"/>
    <property type="chains" value="75/B8=1-146"/>
</dbReference>
<dbReference type="PDB" id="5EL7">
    <property type="method" value="X-ray"/>
    <property type="resolution" value="3.15 A"/>
    <property type="chains" value="75/B8=1-146"/>
</dbReference>
<dbReference type="PDB" id="5F8K">
    <property type="method" value="X-ray"/>
    <property type="resolution" value="2.80 A"/>
    <property type="chains" value="1T/2T=1-131"/>
</dbReference>
<dbReference type="PDB" id="5FDU">
    <property type="method" value="X-ray"/>
    <property type="resolution" value="2.90 A"/>
    <property type="chains" value="1T/2T=1-131"/>
</dbReference>
<dbReference type="PDB" id="5FDV">
    <property type="method" value="X-ray"/>
    <property type="resolution" value="2.80 A"/>
    <property type="chains" value="1T/2T=1-131"/>
</dbReference>
<dbReference type="PDB" id="5HAU">
    <property type="method" value="X-ray"/>
    <property type="resolution" value="3.00 A"/>
    <property type="chains" value="1R/2R=1-146"/>
</dbReference>
<dbReference type="PDB" id="5HCP">
    <property type="method" value="X-ray"/>
    <property type="resolution" value="2.89 A"/>
    <property type="chains" value="1T/2T=1-146"/>
</dbReference>
<dbReference type="PDB" id="5HCQ">
    <property type="method" value="X-ray"/>
    <property type="resolution" value="2.80 A"/>
    <property type="chains" value="1T/2T=1-146"/>
</dbReference>
<dbReference type="PDB" id="5HCR">
    <property type="method" value="X-ray"/>
    <property type="resolution" value="2.80 A"/>
    <property type="chains" value="1T/2T=1-146"/>
</dbReference>
<dbReference type="PDB" id="5HD1">
    <property type="method" value="X-ray"/>
    <property type="resolution" value="2.70 A"/>
    <property type="chains" value="1T/2T=1-146"/>
</dbReference>
<dbReference type="PDB" id="5IB7">
    <property type="method" value="X-ray"/>
    <property type="resolution" value="2.99 A"/>
    <property type="chains" value="75/B8=1-146"/>
</dbReference>
<dbReference type="PDB" id="5IB8">
    <property type="method" value="X-ray"/>
    <property type="resolution" value="3.13 A"/>
    <property type="chains" value="75/B8=1-146"/>
</dbReference>
<dbReference type="PDB" id="5IBB">
    <property type="method" value="X-ray"/>
    <property type="resolution" value="2.96 A"/>
    <property type="chains" value="75/B8=1-146"/>
</dbReference>
<dbReference type="PDB" id="5IMQ">
    <property type="method" value="EM"/>
    <property type="resolution" value="3.80 A"/>
    <property type="chains" value="l=1-146"/>
</dbReference>
<dbReference type="PDB" id="5IMR">
    <property type="method" value="EM"/>
    <property type="chains" value="l=1-146"/>
</dbReference>
<dbReference type="PDB" id="5J30">
    <property type="method" value="X-ray"/>
    <property type="resolution" value="3.20 A"/>
    <property type="chains" value="RT/YT=1-146"/>
</dbReference>
<dbReference type="PDB" id="5J3C">
    <property type="method" value="X-ray"/>
    <property type="resolution" value="3.04 A"/>
    <property type="chains" value="RT/YT=1-146"/>
</dbReference>
<dbReference type="PDB" id="5J4B">
    <property type="method" value="X-ray"/>
    <property type="resolution" value="2.60 A"/>
    <property type="chains" value="1T/2T=1-146"/>
</dbReference>
<dbReference type="PDB" id="5J4C">
    <property type="method" value="X-ray"/>
    <property type="resolution" value="2.80 A"/>
    <property type="chains" value="1T/2T=1-146"/>
</dbReference>
<dbReference type="PDB" id="5J8B">
    <property type="method" value="X-ray"/>
    <property type="resolution" value="2.60 A"/>
    <property type="chains" value="T=1-146"/>
</dbReference>
<dbReference type="PDB" id="5NDJ">
    <property type="method" value="X-ray"/>
    <property type="resolution" value="3.15 A"/>
    <property type="chains" value="75/B8=1-146"/>
</dbReference>
<dbReference type="PDB" id="5NDK">
    <property type="method" value="X-ray"/>
    <property type="resolution" value="2.95 A"/>
    <property type="chains" value="75/B8=1-146"/>
</dbReference>
<dbReference type="PDB" id="5OT7">
    <property type="method" value="EM"/>
    <property type="resolution" value="3.80 A"/>
    <property type="chains" value="u=1-138"/>
</dbReference>
<dbReference type="PDB" id="5UQ7">
    <property type="method" value="EM"/>
    <property type="resolution" value="3.50 A"/>
    <property type="chains" value="T=1-131"/>
</dbReference>
<dbReference type="PDB" id="5UQ8">
    <property type="method" value="EM"/>
    <property type="resolution" value="3.20 A"/>
    <property type="chains" value="T=1-131"/>
</dbReference>
<dbReference type="PDB" id="5VP2">
    <property type="method" value="X-ray"/>
    <property type="resolution" value="2.80 A"/>
    <property type="chains" value="1T/2T=1-146"/>
</dbReference>
<dbReference type="PDB" id="5VPO">
    <property type="method" value="X-ray"/>
    <property type="resolution" value="3.34 A"/>
    <property type="chains" value="RT/YT=1-146"/>
</dbReference>
<dbReference type="PDB" id="5VPP">
    <property type="method" value="X-ray"/>
    <property type="resolution" value="3.90 A"/>
    <property type="chains" value="RT/YT=1-146"/>
</dbReference>
<dbReference type="PDB" id="5W4K">
    <property type="method" value="X-ray"/>
    <property type="resolution" value="2.70 A"/>
    <property type="chains" value="1T/2T=1-146"/>
</dbReference>
<dbReference type="PDB" id="5WIS">
    <property type="method" value="X-ray"/>
    <property type="resolution" value="2.70 A"/>
    <property type="chains" value="1T/2T=1-146"/>
</dbReference>
<dbReference type="PDB" id="5WIT">
    <property type="method" value="X-ray"/>
    <property type="resolution" value="2.60 A"/>
    <property type="chains" value="1T/2T=1-146"/>
</dbReference>
<dbReference type="PDB" id="5ZLU">
    <property type="method" value="EM"/>
    <property type="resolution" value="3.60 A"/>
    <property type="chains" value="m=1-146"/>
</dbReference>
<dbReference type="PDB" id="6BUW">
    <property type="method" value="X-ray"/>
    <property type="resolution" value="3.50 A"/>
    <property type="chains" value="RT/YT=1-146"/>
</dbReference>
<dbReference type="PDB" id="6BZ6">
    <property type="method" value="X-ray"/>
    <property type="resolution" value="3.18 A"/>
    <property type="chains" value="RT/YT=1-146"/>
</dbReference>
<dbReference type="PDB" id="6BZ7">
    <property type="method" value="X-ray"/>
    <property type="resolution" value="3.68 A"/>
    <property type="chains" value="RT/YT=1-146"/>
</dbReference>
<dbReference type="PDB" id="6BZ8">
    <property type="method" value="X-ray"/>
    <property type="resolution" value="3.74 A"/>
    <property type="chains" value="RT/YT=1-146"/>
</dbReference>
<dbReference type="PDB" id="6C5L">
    <property type="method" value="X-ray"/>
    <property type="resolution" value="3.20 A"/>
    <property type="chains" value="BT/DT=1-146"/>
</dbReference>
<dbReference type="PDB" id="6CAE">
    <property type="method" value="X-ray"/>
    <property type="resolution" value="2.60 A"/>
    <property type="chains" value="1T/2T=1-146"/>
</dbReference>
<dbReference type="PDB" id="6CFJ">
    <property type="method" value="X-ray"/>
    <property type="resolution" value="2.80 A"/>
    <property type="chains" value="1T/2T=1-146"/>
</dbReference>
<dbReference type="PDB" id="6CFK">
    <property type="method" value="X-ray"/>
    <property type="resolution" value="2.70 A"/>
    <property type="chains" value="1T/2T=1-146"/>
</dbReference>
<dbReference type="PDB" id="6CFL">
    <property type="method" value="X-ray"/>
    <property type="resolution" value="2.60 A"/>
    <property type="chains" value="1T/2T=1-146"/>
</dbReference>
<dbReference type="PDB" id="6CZR">
    <property type="method" value="X-ray"/>
    <property type="resolution" value="3.14 A"/>
    <property type="chains" value="1T/2T=1-131"/>
</dbReference>
<dbReference type="PDB" id="6FKR">
    <property type="method" value="X-ray"/>
    <property type="resolution" value="3.20 A"/>
    <property type="chains" value="1T/2T=1-131"/>
</dbReference>
<dbReference type="PDB" id="6GSJ">
    <property type="method" value="X-ray"/>
    <property type="resolution" value="2.96 A"/>
    <property type="chains" value="75/B8=1-146"/>
</dbReference>
<dbReference type="PDB" id="6GSK">
    <property type="method" value="X-ray"/>
    <property type="resolution" value="3.36 A"/>
    <property type="chains" value="75/B8=1-146"/>
</dbReference>
<dbReference type="PDB" id="6GSL">
    <property type="method" value="X-ray"/>
    <property type="resolution" value="3.16 A"/>
    <property type="chains" value="75/B8=1-146"/>
</dbReference>
<dbReference type="PDB" id="6GZQ">
    <property type="method" value="EM"/>
    <property type="resolution" value="3.28 A"/>
    <property type="chains" value="O1=1-137"/>
</dbReference>
<dbReference type="PDB" id="6GZX">
    <property type="method" value="EM"/>
    <property type="resolution" value="4.57 A"/>
    <property type="chains" value="O1/O2=1-137"/>
</dbReference>
<dbReference type="PDB" id="6GZZ">
    <property type="method" value="EM"/>
    <property type="resolution" value="4.13 A"/>
    <property type="chains" value="O1/O2=1-137"/>
</dbReference>
<dbReference type="PDB" id="6N9E">
    <property type="method" value="X-ray"/>
    <property type="resolution" value="3.70 A"/>
    <property type="chains" value="1T/2T=1-146"/>
</dbReference>
<dbReference type="PDB" id="6N9F">
    <property type="method" value="X-ray"/>
    <property type="resolution" value="3.70 A"/>
    <property type="chains" value="1T/2T=1-146"/>
</dbReference>
<dbReference type="PDB" id="6ND5">
    <property type="method" value="X-ray"/>
    <property type="resolution" value="2.60 A"/>
    <property type="chains" value="1T/2T=1-146"/>
</dbReference>
<dbReference type="PDB" id="6ND6">
    <property type="method" value="X-ray"/>
    <property type="resolution" value="2.85 A"/>
    <property type="chains" value="1T/2T=1-146"/>
</dbReference>
<dbReference type="PDB" id="6NDK">
    <property type="method" value="X-ray"/>
    <property type="resolution" value="3.64 A"/>
    <property type="chains" value="RT/YT=1-146"/>
</dbReference>
<dbReference type="PDB" id="6NSH">
    <property type="method" value="X-ray"/>
    <property type="resolution" value="3.40 A"/>
    <property type="chains" value="RT/YT=1-146"/>
</dbReference>
<dbReference type="PDB" id="6NTA">
    <property type="method" value="X-ray"/>
    <property type="resolution" value="3.10 A"/>
    <property type="chains" value="RT/YT=1-146"/>
</dbReference>
<dbReference type="PDB" id="6NUO">
    <property type="method" value="X-ray"/>
    <property type="resolution" value="3.20 A"/>
    <property type="chains" value="RT/YT=1-146"/>
</dbReference>
<dbReference type="PDB" id="6NWY">
    <property type="method" value="X-ray"/>
    <property type="resolution" value="3.50 A"/>
    <property type="chains" value="RT/YT=1-146"/>
</dbReference>
<dbReference type="PDB" id="6O3M">
    <property type="method" value="X-ray"/>
    <property type="resolution" value="3.97 A"/>
    <property type="chains" value="RT/YT=1-146"/>
</dbReference>
<dbReference type="PDB" id="6O97">
    <property type="method" value="X-ray"/>
    <property type="resolution" value="2.75 A"/>
    <property type="chains" value="1T/2T=1-146"/>
</dbReference>
<dbReference type="PDB" id="6OF1">
    <property type="method" value="X-ray"/>
    <property type="resolution" value="2.80 A"/>
    <property type="chains" value="1T/2T=1-146"/>
</dbReference>
<dbReference type="PDB" id="6OF6">
    <property type="method" value="X-ray"/>
    <property type="resolution" value="3.20 A"/>
    <property type="chains" value="RT/YT=1-146"/>
</dbReference>
<dbReference type="PDB" id="6OJ2">
    <property type="method" value="X-ray"/>
    <property type="resolution" value="3.20 A"/>
    <property type="chains" value="RT/YT=1-146"/>
</dbReference>
<dbReference type="PDB" id="6OPE">
    <property type="method" value="X-ray"/>
    <property type="resolution" value="3.10 A"/>
    <property type="chains" value="RT/YT=1-146"/>
</dbReference>
<dbReference type="PDB" id="6ORD">
    <property type="method" value="X-ray"/>
    <property type="resolution" value="3.10 A"/>
    <property type="chains" value="RT/YT=1-146"/>
</dbReference>
<dbReference type="PDB" id="6OSI">
    <property type="method" value="X-ray"/>
    <property type="resolution" value="4.14 A"/>
    <property type="chains" value="RT/YT=1-146"/>
</dbReference>
<dbReference type="PDB" id="6OTR">
    <property type="method" value="X-ray"/>
    <property type="resolution" value="3.12 A"/>
    <property type="chains" value="RT/YT=1-146"/>
</dbReference>
<dbReference type="PDB" id="6OXA">
    <property type="method" value="X-ray"/>
    <property type="resolution" value="3.25 A"/>
    <property type="chains" value="RT/YT=1-146"/>
</dbReference>
<dbReference type="PDB" id="6OXI">
    <property type="method" value="X-ray"/>
    <property type="resolution" value="3.50 A"/>
    <property type="chains" value="RT/YT=1-146"/>
</dbReference>
<dbReference type="PDB" id="6Q95">
    <property type="method" value="EM"/>
    <property type="resolution" value="3.70 A"/>
    <property type="chains" value="P=1-138"/>
</dbReference>
<dbReference type="PDB" id="6QNQ">
    <property type="method" value="X-ray"/>
    <property type="resolution" value="3.50 A"/>
    <property type="chains" value="75/B8=1-146"/>
</dbReference>
<dbReference type="PDB" id="6QNR">
    <property type="method" value="X-ray"/>
    <property type="resolution" value="3.10 A"/>
    <property type="chains" value="75/B8=1-146"/>
</dbReference>
<dbReference type="PDB" id="6UCQ">
    <property type="method" value="X-ray"/>
    <property type="resolution" value="3.50 A"/>
    <property type="chains" value="1T/2T=1-146"/>
</dbReference>
<dbReference type="PDB" id="6UO1">
    <property type="method" value="X-ray"/>
    <property type="resolution" value="2.95 A"/>
    <property type="chains" value="1T/2T=1-146"/>
</dbReference>
<dbReference type="PDB" id="6XHV">
    <property type="method" value="X-ray"/>
    <property type="resolution" value="2.40 A"/>
    <property type="chains" value="1T/2T=1-146"/>
</dbReference>
<dbReference type="PDB" id="6XHW">
    <property type="method" value="X-ray"/>
    <property type="resolution" value="2.50 A"/>
    <property type="chains" value="1T/2T=1-146"/>
</dbReference>
<dbReference type="PDB" id="6XHX">
    <property type="method" value="X-ray"/>
    <property type="resolution" value="2.55 A"/>
    <property type="chains" value="1T/2T=1-146"/>
</dbReference>
<dbReference type="PDB" id="6XHY">
    <property type="method" value="X-ray"/>
    <property type="resolution" value="2.60 A"/>
    <property type="chains" value="1T/2T=1-146"/>
</dbReference>
<dbReference type="PDB" id="6XQD">
    <property type="method" value="X-ray"/>
    <property type="resolution" value="2.80 A"/>
    <property type="chains" value="1T/2T=1-146"/>
</dbReference>
<dbReference type="PDB" id="6XQE">
    <property type="method" value="X-ray"/>
    <property type="resolution" value="3.00 A"/>
    <property type="chains" value="1T/2T=1-146"/>
</dbReference>
<dbReference type="PDB" id="7AZO">
    <property type="method" value="X-ray"/>
    <property type="resolution" value="3.30 A"/>
    <property type="chains" value="L19A/L19B=1-146"/>
</dbReference>
<dbReference type="PDB" id="7AZS">
    <property type="method" value="X-ray"/>
    <property type="resolution" value="3.10 A"/>
    <property type="chains" value="L19A/L19B=1-146"/>
</dbReference>
<dbReference type="PDB" id="7JQL">
    <property type="method" value="X-ray"/>
    <property type="resolution" value="3.00 A"/>
    <property type="chains" value="1T/2T=1-146"/>
</dbReference>
<dbReference type="PDB" id="7JQM">
    <property type="method" value="X-ray"/>
    <property type="resolution" value="3.05 A"/>
    <property type="chains" value="1T/2T=1-146"/>
</dbReference>
<dbReference type="PDB" id="7LH5">
    <property type="method" value="X-ray"/>
    <property type="resolution" value="3.27 A"/>
    <property type="chains" value="BT/DT=1-146"/>
</dbReference>
<dbReference type="PDB" id="7MD7">
    <property type="method" value="X-ray"/>
    <property type="resolution" value="2.80 A"/>
    <property type="chains" value="1T/2T=1-146"/>
</dbReference>
<dbReference type="PDB" id="7RQ8">
    <property type="method" value="X-ray"/>
    <property type="resolution" value="2.50 A"/>
    <property type="chains" value="1T/2T=1-146"/>
</dbReference>
<dbReference type="PDB" id="7RQ9">
    <property type="method" value="X-ray"/>
    <property type="resolution" value="2.60 A"/>
    <property type="chains" value="1T/2T=1-146"/>
</dbReference>
<dbReference type="PDB" id="7RQA">
    <property type="method" value="X-ray"/>
    <property type="resolution" value="2.40 A"/>
    <property type="chains" value="1T/2T=1-146"/>
</dbReference>
<dbReference type="PDB" id="7RQB">
    <property type="method" value="X-ray"/>
    <property type="resolution" value="2.45 A"/>
    <property type="chains" value="1T/2T=1-146"/>
</dbReference>
<dbReference type="PDB" id="7RQC">
    <property type="method" value="X-ray"/>
    <property type="resolution" value="2.50 A"/>
    <property type="chains" value="1T/2T=1-146"/>
</dbReference>
<dbReference type="PDB" id="7RQD">
    <property type="method" value="X-ray"/>
    <property type="resolution" value="2.50 A"/>
    <property type="chains" value="1T/2T=1-146"/>
</dbReference>
<dbReference type="PDB" id="7RQE">
    <property type="method" value="X-ray"/>
    <property type="resolution" value="2.40 A"/>
    <property type="chains" value="1T/2T=1-146"/>
</dbReference>
<dbReference type="PDB" id="7U2H">
    <property type="method" value="X-ray"/>
    <property type="resolution" value="2.55 A"/>
    <property type="chains" value="1T/2T=1-146"/>
</dbReference>
<dbReference type="PDB" id="7U2I">
    <property type="method" value="X-ray"/>
    <property type="resolution" value="2.55 A"/>
    <property type="chains" value="1T/2T=1-146"/>
</dbReference>
<dbReference type="PDB" id="7U2J">
    <property type="method" value="X-ray"/>
    <property type="resolution" value="2.55 A"/>
    <property type="chains" value="1T/2T=1-146"/>
</dbReference>
<dbReference type="PDB" id="8CVJ">
    <property type="method" value="X-ray"/>
    <property type="resolution" value="2.40 A"/>
    <property type="chains" value="1T/2T=1-146"/>
</dbReference>
<dbReference type="PDB" id="8CVK">
    <property type="method" value="X-ray"/>
    <property type="resolution" value="2.50 A"/>
    <property type="chains" value="1T/2T=1-146"/>
</dbReference>
<dbReference type="PDB" id="8CVL">
    <property type="method" value="X-ray"/>
    <property type="resolution" value="2.30 A"/>
    <property type="chains" value="1T/2T=1-146"/>
</dbReference>
<dbReference type="PDB" id="8EKB">
    <property type="method" value="X-ray"/>
    <property type="resolution" value="2.70 A"/>
    <property type="chains" value="1T/2T=1-146"/>
</dbReference>
<dbReference type="PDB" id="8EV6">
    <property type="method" value="X-ray"/>
    <property type="resolution" value="2.95 A"/>
    <property type="chains" value="1T/2T=1-146"/>
</dbReference>
<dbReference type="PDB" id="8EV7">
    <property type="method" value="X-ray"/>
    <property type="resolution" value="2.89 A"/>
    <property type="chains" value="1T/2T=1-146"/>
</dbReference>
<dbReference type="PDB" id="8FC1">
    <property type="method" value="X-ray"/>
    <property type="resolution" value="2.50 A"/>
    <property type="chains" value="1T/2T=1-146"/>
</dbReference>
<dbReference type="PDB" id="8FC2">
    <property type="method" value="X-ray"/>
    <property type="resolution" value="2.50 A"/>
    <property type="chains" value="1T/2T=1-146"/>
</dbReference>
<dbReference type="PDB" id="8FC3">
    <property type="method" value="X-ray"/>
    <property type="resolution" value="2.60 A"/>
    <property type="chains" value="1T/2T=1-146"/>
</dbReference>
<dbReference type="PDB" id="8FC4">
    <property type="method" value="X-ray"/>
    <property type="resolution" value="2.45 A"/>
    <property type="chains" value="1T/2T=1-146"/>
</dbReference>
<dbReference type="PDB" id="8FC5">
    <property type="method" value="X-ray"/>
    <property type="resolution" value="2.65 A"/>
    <property type="chains" value="1T/2T=1-146"/>
</dbReference>
<dbReference type="PDB" id="8FC6">
    <property type="method" value="X-ray"/>
    <property type="resolution" value="2.35 A"/>
    <property type="chains" value="1T/2T=1-146"/>
</dbReference>
<dbReference type="PDB" id="8FOM">
    <property type="method" value="X-ray"/>
    <property type="resolution" value="3.58 A"/>
    <property type="chains" value="RT/YT=1-146"/>
</dbReference>
<dbReference type="PDB" id="8FON">
    <property type="method" value="X-ray"/>
    <property type="resolution" value="3.64 A"/>
    <property type="chains" value="RT/YT=1-146"/>
</dbReference>
<dbReference type="PDB" id="8G29">
    <property type="method" value="X-ray"/>
    <property type="resolution" value="2.55 A"/>
    <property type="chains" value="1T/2T=1-146"/>
</dbReference>
<dbReference type="PDB" id="8G2A">
    <property type="method" value="X-ray"/>
    <property type="resolution" value="2.45 A"/>
    <property type="chains" value="1T/2T=1-146"/>
</dbReference>
<dbReference type="PDB" id="8G2B">
    <property type="method" value="X-ray"/>
    <property type="resolution" value="2.55 A"/>
    <property type="chains" value="1T/2T=1-146"/>
</dbReference>
<dbReference type="PDB" id="8G2C">
    <property type="method" value="X-ray"/>
    <property type="resolution" value="2.65 A"/>
    <property type="chains" value="1T/2T=1-146"/>
</dbReference>
<dbReference type="PDB" id="8G2D">
    <property type="method" value="X-ray"/>
    <property type="resolution" value="2.70 A"/>
    <property type="chains" value="1T/2T=1-146"/>
</dbReference>
<dbReference type="PDB" id="8T8B">
    <property type="method" value="X-ray"/>
    <property type="resolution" value="2.65 A"/>
    <property type="chains" value="1T/2T=1-146"/>
</dbReference>
<dbReference type="PDB" id="8T8C">
    <property type="method" value="X-ray"/>
    <property type="resolution" value="2.60 A"/>
    <property type="chains" value="1T/2T=1-146"/>
</dbReference>
<dbReference type="PDB" id="8UD6">
    <property type="method" value="X-ray"/>
    <property type="resolution" value="2.70 A"/>
    <property type="chains" value="1T/2T=1-146"/>
</dbReference>
<dbReference type="PDB" id="8UD7">
    <property type="method" value="X-ray"/>
    <property type="resolution" value="2.55 A"/>
    <property type="chains" value="1T/2T=1-146"/>
</dbReference>
<dbReference type="PDB" id="8UD8">
    <property type="method" value="X-ray"/>
    <property type="resolution" value="2.60 A"/>
    <property type="chains" value="1T/2T=1-146"/>
</dbReference>
<dbReference type="PDB" id="8UVR">
    <property type="method" value="X-ray"/>
    <property type="resolution" value="2.60 A"/>
    <property type="chains" value="1T/2T=1-146"/>
</dbReference>
<dbReference type="PDB" id="8UVS">
    <property type="method" value="X-ray"/>
    <property type="resolution" value="2.75 A"/>
    <property type="chains" value="1T/2T=1-146"/>
</dbReference>
<dbReference type="PDB" id="8VTU">
    <property type="method" value="X-ray"/>
    <property type="resolution" value="2.40 A"/>
    <property type="chains" value="1T/2T=1-146"/>
</dbReference>
<dbReference type="PDB" id="8VTV">
    <property type="method" value="X-ray"/>
    <property type="resolution" value="2.55 A"/>
    <property type="chains" value="1T/2T=1-146"/>
</dbReference>
<dbReference type="PDB" id="8VTW">
    <property type="method" value="X-ray"/>
    <property type="resolution" value="2.35 A"/>
    <property type="chains" value="1T/2T=1-146"/>
</dbReference>
<dbReference type="PDB" id="8VTX">
    <property type="method" value="X-ray"/>
    <property type="resolution" value="2.40 A"/>
    <property type="chains" value="1T/2T=1-146"/>
</dbReference>
<dbReference type="PDB" id="8VTY">
    <property type="method" value="X-ray"/>
    <property type="resolution" value="2.60 A"/>
    <property type="chains" value="1T/2T=1-146"/>
</dbReference>
<dbReference type="PDB" id="8WV1">
    <property type="method" value="X-ray"/>
    <property type="resolution" value="3.99 A"/>
    <property type="chains" value="O/o=1-146"/>
</dbReference>
<dbReference type="PDB" id="9B00">
    <property type="method" value="X-ray"/>
    <property type="resolution" value="2.80 A"/>
    <property type="chains" value="1T/2T=1-146"/>
</dbReference>
<dbReference type="PDB" id="9D0J">
    <property type="method" value="X-ray"/>
    <property type="resolution" value="2.50 A"/>
    <property type="chains" value="1T/2T=1-146"/>
</dbReference>
<dbReference type="PDB" id="9D7R">
    <property type="method" value="X-ray"/>
    <property type="resolution" value="2.70 A"/>
    <property type="chains" value="1T/2T=1-146"/>
</dbReference>
<dbReference type="PDB" id="9D7S">
    <property type="method" value="X-ray"/>
    <property type="resolution" value="2.85 A"/>
    <property type="chains" value="1T/2T=1-146"/>
</dbReference>
<dbReference type="PDB" id="9D7T">
    <property type="method" value="X-ray"/>
    <property type="resolution" value="2.70 A"/>
    <property type="chains" value="1T/2T=1-146"/>
</dbReference>
<dbReference type="PDB" id="9DFC">
    <property type="method" value="X-ray"/>
    <property type="resolution" value="2.50 A"/>
    <property type="chains" value="1T/2T=1-146"/>
</dbReference>
<dbReference type="PDB" id="9DFD">
    <property type="method" value="X-ray"/>
    <property type="resolution" value="2.60 A"/>
    <property type="chains" value="1T/2T=1-146"/>
</dbReference>
<dbReference type="PDB" id="9DFE">
    <property type="method" value="X-ray"/>
    <property type="resolution" value="2.60 A"/>
    <property type="chains" value="1T/2T=1-146"/>
</dbReference>
<dbReference type="PDBsum" id="1VVJ"/>
<dbReference type="PDBsum" id="1VY4"/>
<dbReference type="PDBsum" id="1VY5"/>
<dbReference type="PDBsum" id="1VY6"/>
<dbReference type="PDBsum" id="1VY7"/>
<dbReference type="PDBsum" id="4L47"/>
<dbReference type="PDBsum" id="4L71"/>
<dbReference type="PDBsum" id="4LEL"/>
<dbReference type="PDBsum" id="4LFZ"/>
<dbReference type="PDBsum" id="4LNT"/>
<dbReference type="PDBsum" id="4LSK"/>
<dbReference type="PDBsum" id="4LT8"/>
<dbReference type="PDBsum" id="4P6F"/>
<dbReference type="PDBsum" id="4P70"/>
<dbReference type="PDBsum" id="4TUA"/>
<dbReference type="PDBsum" id="4TUB"/>
<dbReference type="PDBsum" id="4TUC"/>
<dbReference type="PDBsum" id="4TUD"/>
<dbReference type="PDBsum" id="4TUE"/>
<dbReference type="PDBsum" id="4V42"/>
<dbReference type="PDBsum" id="4V4P"/>
<dbReference type="PDBsum" id="4V4X"/>
<dbReference type="PDBsum" id="4V4Y"/>
<dbReference type="PDBsum" id="4V4Z"/>
<dbReference type="PDBsum" id="4V51"/>
<dbReference type="PDBsum" id="4V5A"/>
<dbReference type="PDBsum" id="4V5C"/>
<dbReference type="PDBsum" id="4V5D"/>
<dbReference type="PDBsum" id="4V5E"/>
<dbReference type="PDBsum" id="4V5F"/>
<dbReference type="PDBsum" id="4V5G"/>
<dbReference type="PDBsum" id="4V5J"/>
<dbReference type="PDBsum" id="4V5K"/>
<dbReference type="PDBsum" id="4V5L"/>
<dbReference type="PDBsum" id="4V5M"/>
<dbReference type="PDBsum" id="4V5N"/>
<dbReference type="PDBsum" id="4V5P"/>
<dbReference type="PDBsum" id="4V5Q"/>
<dbReference type="PDBsum" id="4V5R"/>
<dbReference type="PDBsum" id="4V5S"/>
<dbReference type="PDBsum" id="4V68"/>
<dbReference type="PDBsum" id="4V6A"/>
<dbReference type="PDBsum" id="4V6F"/>
<dbReference type="PDBsum" id="4V6G"/>
<dbReference type="PDBsum" id="4V7J"/>
<dbReference type="PDBsum" id="4V7K"/>
<dbReference type="PDBsum" id="4V7L"/>
<dbReference type="PDBsum" id="4V7M"/>
<dbReference type="PDBsum" id="4V7W"/>
<dbReference type="PDBsum" id="4V7X"/>
<dbReference type="PDBsum" id="4V7Y"/>
<dbReference type="PDBsum" id="4V7Z"/>
<dbReference type="PDBsum" id="4V87"/>
<dbReference type="PDBsum" id="4V8A"/>
<dbReference type="PDBsum" id="4V8B"/>
<dbReference type="PDBsum" id="4V8C"/>
<dbReference type="PDBsum" id="4V8D"/>
<dbReference type="PDBsum" id="4V8E"/>
<dbReference type="PDBsum" id="4V8F"/>
<dbReference type="PDBsum" id="4V8G"/>
<dbReference type="PDBsum" id="4V8H"/>
<dbReference type="PDBsum" id="4V8I"/>
<dbReference type="PDBsum" id="4V8J"/>
<dbReference type="PDBsum" id="4V8N"/>
<dbReference type="PDBsum" id="4V8O"/>
<dbReference type="PDBsum" id="4V8Q"/>
<dbReference type="PDBsum" id="4V8U"/>
<dbReference type="PDBsum" id="4V8X"/>
<dbReference type="PDBsum" id="4V90"/>
<dbReference type="PDBsum" id="4V95"/>
<dbReference type="PDBsum" id="4V97"/>
<dbReference type="PDBsum" id="4V9A"/>
<dbReference type="PDBsum" id="4V9B"/>
<dbReference type="PDBsum" id="4V9H"/>
<dbReference type="PDBsum" id="4V9I"/>
<dbReference type="PDBsum" id="4V9R"/>
<dbReference type="PDBsum" id="4V9S"/>
<dbReference type="PDBsum" id="4W2E"/>
<dbReference type="PDBsum" id="4W2F"/>
<dbReference type="PDBsum" id="4W2G"/>
<dbReference type="PDBsum" id="4W2H"/>
<dbReference type="PDBsum" id="4W2I"/>
<dbReference type="PDBsum" id="4W4G"/>
<dbReference type="PDBsum" id="4WPO"/>
<dbReference type="PDBsum" id="4WQ1"/>
<dbReference type="PDBsum" id="4WQF"/>
<dbReference type="PDBsum" id="4WQR"/>
<dbReference type="PDBsum" id="4WQU"/>
<dbReference type="PDBsum" id="4WQY"/>
<dbReference type="PDBsum" id="4WR6"/>
<dbReference type="PDBsum" id="4WRA"/>
<dbReference type="PDBsum" id="4WRO"/>
<dbReference type="PDBsum" id="4WSD"/>
<dbReference type="PDBsum" id="4WSM"/>
<dbReference type="PDBsum" id="4WT1"/>
<dbReference type="PDBsum" id="4WT8"/>
<dbReference type="PDBsum" id="4WU1"/>
<dbReference type="PDBsum" id="4WZD"/>
<dbReference type="PDBsum" id="4WZO"/>
<dbReference type="PDBsum" id="4Y4O"/>
<dbReference type="PDBsum" id="4Y4P"/>
<dbReference type="PDBsum" id="4YPB"/>
<dbReference type="PDBsum" id="4YZV"/>
<dbReference type="PDBsum" id="4Z3S"/>
<dbReference type="PDBsum" id="4Z8C"/>
<dbReference type="PDBsum" id="4ZER"/>
<dbReference type="PDBsum" id="4ZSN"/>
<dbReference type="PDBsum" id="5A9Z"/>
<dbReference type="PDBsum" id="5AA0"/>
<dbReference type="PDBsum" id="5CZP"/>
<dbReference type="PDBsum" id="5D8B"/>
<dbReference type="PDBsum" id="5DFE"/>
<dbReference type="PDBsum" id="5DOX"/>
<dbReference type="PDBsum" id="5DOY"/>
<dbReference type="PDBsum" id="5E7K"/>
<dbReference type="PDBsum" id="5E81"/>
<dbReference type="PDBsum" id="5EL4"/>
<dbReference type="PDBsum" id="5EL5"/>
<dbReference type="PDBsum" id="5EL6"/>
<dbReference type="PDBsum" id="5EL7"/>
<dbReference type="PDBsum" id="5F8K"/>
<dbReference type="PDBsum" id="5FDU"/>
<dbReference type="PDBsum" id="5FDV"/>
<dbReference type="PDBsum" id="5HAU"/>
<dbReference type="PDBsum" id="5HCP"/>
<dbReference type="PDBsum" id="5HCQ"/>
<dbReference type="PDBsum" id="5HCR"/>
<dbReference type="PDBsum" id="5HD1"/>
<dbReference type="PDBsum" id="5IB7"/>
<dbReference type="PDBsum" id="5IB8"/>
<dbReference type="PDBsum" id="5IBB"/>
<dbReference type="PDBsum" id="5IMQ"/>
<dbReference type="PDBsum" id="5IMR"/>
<dbReference type="PDBsum" id="5J30"/>
<dbReference type="PDBsum" id="5J3C"/>
<dbReference type="PDBsum" id="5J4B"/>
<dbReference type="PDBsum" id="5J4C"/>
<dbReference type="PDBsum" id="5J8B"/>
<dbReference type="PDBsum" id="5NDJ"/>
<dbReference type="PDBsum" id="5NDK"/>
<dbReference type="PDBsum" id="5OT7"/>
<dbReference type="PDBsum" id="5UQ7"/>
<dbReference type="PDBsum" id="5UQ8"/>
<dbReference type="PDBsum" id="5VP2"/>
<dbReference type="PDBsum" id="5VPO"/>
<dbReference type="PDBsum" id="5VPP"/>
<dbReference type="PDBsum" id="5W4K"/>
<dbReference type="PDBsum" id="5WIS"/>
<dbReference type="PDBsum" id="5WIT"/>
<dbReference type="PDBsum" id="5ZLU"/>
<dbReference type="PDBsum" id="6BUW"/>
<dbReference type="PDBsum" id="6BZ6"/>
<dbReference type="PDBsum" id="6BZ7"/>
<dbReference type="PDBsum" id="6BZ8"/>
<dbReference type="PDBsum" id="6C5L"/>
<dbReference type="PDBsum" id="6CAE"/>
<dbReference type="PDBsum" id="6CFJ"/>
<dbReference type="PDBsum" id="6CFK"/>
<dbReference type="PDBsum" id="6CFL"/>
<dbReference type="PDBsum" id="6CZR"/>
<dbReference type="PDBsum" id="6FKR"/>
<dbReference type="PDBsum" id="6GSJ"/>
<dbReference type="PDBsum" id="6GSK"/>
<dbReference type="PDBsum" id="6GSL"/>
<dbReference type="PDBsum" id="6GZQ"/>
<dbReference type="PDBsum" id="6GZX"/>
<dbReference type="PDBsum" id="6GZZ"/>
<dbReference type="PDBsum" id="6N9E"/>
<dbReference type="PDBsum" id="6N9F"/>
<dbReference type="PDBsum" id="6ND5"/>
<dbReference type="PDBsum" id="6ND6"/>
<dbReference type="PDBsum" id="6NDK"/>
<dbReference type="PDBsum" id="6NSH"/>
<dbReference type="PDBsum" id="6NTA"/>
<dbReference type="PDBsum" id="6NUO"/>
<dbReference type="PDBsum" id="6NWY"/>
<dbReference type="PDBsum" id="6O3M"/>
<dbReference type="PDBsum" id="6O97"/>
<dbReference type="PDBsum" id="6OF1"/>
<dbReference type="PDBsum" id="6OF6"/>
<dbReference type="PDBsum" id="6OJ2"/>
<dbReference type="PDBsum" id="6OPE"/>
<dbReference type="PDBsum" id="6ORD"/>
<dbReference type="PDBsum" id="6OSI"/>
<dbReference type="PDBsum" id="6OTR"/>
<dbReference type="PDBsum" id="6OXA"/>
<dbReference type="PDBsum" id="6OXI"/>
<dbReference type="PDBsum" id="6Q95"/>
<dbReference type="PDBsum" id="6QNQ"/>
<dbReference type="PDBsum" id="6QNR"/>
<dbReference type="PDBsum" id="6UCQ"/>
<dbReference type="PDBsum" id="6UO1"/>
<dbReference type="PDBsum" id="6XHV"/>
<dbReference type="PDBsum" id="6XHW"/>
<dbReference type="PDBsum" id="6XHX"/>
<dbReference type="PDBsum" id="6XHY"/>
<dbReference type="PDBsum" id="6XQD"/>
<dbReference type="PDBsum" id="6XQE"/>
<dbReference type="PDBsum" id="7AZO"/>
<dbReference type="PDBsum" id="7AZS"/>
<dbReference type="PDBsum" id="7JQL"/>
<dbReference type="PDBsum" id="7JQM"/>
<dbReference type="PDBsum" id="7LH5"/>
<dbReference type="PDBsum" id="7MD7"/>
<dbReference type="PDBsum" id="7RQ8"/>
<dbReference type="PDBsum" id="7RQ9"/>
<dbReference type="PDBsum" id="7RQA"/>
<dbReference type="PDBsum" id="7RQB"/>
<dbReference type="PDBsum" id="7RQC"/>
<dbReference type="PDBsum" id="7RQD"/>
<dbReference type="PDBsum" id="7RQE"/>
<dbReference type="PDBsum" id="7U2H"/>
<dbReference type="PDBsum" id="7U2I"/>
<dbReference type="PDBsum" id="7U2J"/>
<dbReference type="PDBsum" id="8CVJ"/>
<dbReference type="PDBsum" id="8CVK"/>
<dbReference type="PDBsum" id="8CVL"/>
<dbReference type="PDBsum" id="8EKB"/>
<dbReference type="PDBsum" id="8EV6"/>
<dbReference type="PDBsum" id="8EV7"/>
<dbReference type="PDBsum" id="8FC1"/>
<dbReference type="PDBsum" id="8FC2"/>
<dbReference type="PDBsum" id="8FC3"/>
<dbReference type="PDBsum" id="8FC4"/>
<dbReference type="PDBsum" id="8FC5"/>
<dbReference type="PDBsum" id="8FC6"/>
<dbReference type="PDBsum" id="8FOM"/>
<dbReference type="PDBsum" id="8FON"/>
<dbReference type="PDBsum" id="8G29"/>
<dbReference type="PDBsum" id="8G2A"/>
<dbReference type="PDBsum" id="8G2B"/>
<dbReference type="PDBsum" id="8G2C"/>
<dbReference type="PDBsum" id="8G2D"/>
<dbReference type="PDBsum" id="8T8B"/>
<dbReference type="PDBsum" id="8T8C"/>
<dbReference type="PDBsum" id="8UD6"/>
<dbReference type="PDBsum" id="8UD7"/>
<dbReference type="PDBsum" id="8UD8"/>
<dbReference type="PDBsum" id="8UVR"/>
<dbReference type="PDBsum" id="8UVS"/>
<dbReference type="PDBsum" id="8VTU"/>
<dbReference type="PDBsum" id="8VTV"/>
<dbReference type="PDBsum" id="8VTW"/>
<dbReference type="PDBsum" id="8VTX"/>
<dbReference type="PDBsum" id="8VTY"/>
<dbReference type="PDBsum" id="8WV1"/>
<dbReference type="PDBsum" id="9B00"/>
<dbReference type="PDBsum" id="9D0J"/>
<dbReference type="PDBsum" id="9D7R"/>
<dbReference type="PDBsum" id="9D7S"/>
<dbReference type="PDBsum" id="9D7T"/>
<dbReference type="PDBsum" id="9DFC"/>
<dbReference type="PDBsum" id="9DFD"/>
<dbReference type="PDBsum" id="9DFE"/>
<dbReference type="EMDB" id="EMD-0101"/>
<dbReference type="EMDB" id="EMD-0104"/>
<dbReference type="EMDB" id="EMD-0105"/>
<dbReference type="EMDB" id="EMD-3852"/>
<dbReference type="EMDB" id="EMD-4475"/>
<dbReference type="EMDB" id="EMD-6934"/>
<dbReference type="EMDB" id="EMD-8596"/>
<dbReference type="EMDB" id="EMD-8597"/>
<dbReference type="SMR" id="P60490"/>
<dbReference type="IntAct" id="P60490">
    <property type="interactions" value="8"/>
</dbReference>
<dbReference type="EnsemblBacteria" id="BAD70854">
    <property type="protein sequence ID" value="BAD70854"/>
    <property type="gene ID" value="BAD70854"/>
</dbReference>
<dbReference type="GeneID" id="3168297"/>
<dbReference type="KEGG" id="ttj:TTHA1031"/>
<dbReference type="PATRIC" id="fig|300852.9.peg.1011"/>
<dbReference type="eggNOG" id="COG0335">
    <property type="taxonomic scope" value="Bacteria"/>
</dbReference>
<dbReference type="HOGENOM" id="CLU_103507_0_2_0"/>
<dbReference type="PhylomeDB" id="P60490"/>
<dbReference type="Proteomes" id="UP000000532">
    <property type="component" value="Chromosome"/>
</dbReference>
<dbReference type="GO" id="GO:0022625">
    <property type="term" value="C:cytosolic large ribosomal subunit"/>
    <property type="evidence" value="ECO:0007669"/>
    <property type="project" value="TreeGrafter"/>
</dbReference>
<dbReference type="GO" id="GO:0019843">
    <property type="term" value="F:rRNA binding"/>
    <property type="evidence" value="ECO:0007669"/>
    <property type="project" value="UniProtKB-KW"/>
</dbReference>
<dbReference type="GO" id="GO:0003735">
    <property type="term" value="F:structural constituent of ribosome"/>
    <property type="evidence" value="ECO:0007669"/>
    <property type="project" value="InterPro"/>
</dbReference>
<dbReference type="GO" id="GO:0006412">
    <property type="term" value="P:translation"/>
    <property type="evidence" value="ECO:0007669"/>
    <property type="project" value="UniProtKB-UniRule"/>
</dbReference>
<dbReference type="Gene3D" id="2.30.30.790">
    <property type="match status" value="1"/>
</dbReference>
<dbReference type="HAMAP" id="MF_00402">
    <property type="entry name" value="Ribosomal_bL19"/>
    <property type="match status" value="1"/>
</dbReference>
<dbReference type="InterPro" id="IPR001857">
    <property type="entry name" value="Ribosomal_bL19"/>
</dbReference>
<dbReference type="InterPro" id="IPR018257">
    <property type="entry name" value="Ribosomal_bL19_CS"/>
</dbReference>
<dbReference type="InterPro" id="IPR038657">
    <property type="entry name" value="Ribosomal_bL19_sf"/>
</dbReference>
<dbReference type="InterPro" id="IPR008991">
    <property type="entry name" value="Translation_prot_SH3-like_sf"/>
</dbReference>
<dbReference type="NCBIfam" id="TIGR01024">
    <property type="entry name" value="rplS_bact"/>
    <property type="match status" value="1"/>
</dbReference>
<dbReference type="PANTHER" id="PTHR15680:SF9">
    <property type="entry name" value="LARGE RIBOSOMAL SUBUNIT PROTEIN BL19M"/>
    <property type="match status" value="1"/>
</dbReference>
<dbReference type="PANTHER" id="PTHR15680">
    <property type="entry name" value="RIBOSOMAL PROTEIN L19"/>
    <property type="match status" value="1"/>
</dbReference>
<dbReference type="Pfam" id="PF01245">
    <property type="entry name" value="Ribosomal_L19"/>
    <property type="match status" value="1"/>
</dbReference>
<dbReference type="PIRSF" id="PIRSF002191">
    <property type="entry name" value="Ribosomal_L19"/>
    <property type="match status" value="1"/>
</dbReference>
<dbReference type="PRINTS" id="PR00061">
    <property type="entry name" value="RIBOSOMALL19"/>
</dbReference>
<dbReference type="SUPFAM" id="SSF50104">
    <property type="entry name" value="Translation proteins SH3-like domain"/>
    <property type="match status" value="1"/>
</dbReference>
<dbReference type="PROSITE" id="PS01015">
    <property type="entry name" value="RIBOSOMAL_L19"/>
    <property type="match status" value="1"/>
</dbReference>
<reference key="1">
    <citation type="submission" date="2004-11" db="EMBL/GenBank/DDBJ databases">
        <title>Complete genome sequence of Thermus thermophilus HB8.</title>
        <authorList>
            <person name="Masui R."/>
            <person name="Kurokawa K."/>
            <person name="Nakagawa N."/>
            <person name="Tokunaga F."/>
            <person name="Koyama Y."/>
            <person name="Shibata T."/>
            <person name="Oshima T."/>
            <person name="Yokoyama S."/>
            <person name="Yasunaga T."/>
            <person name="Kuramitsu S."/>
        </authorList>
    </citation>
    <scope>NUCLEOTIDE SEQUENCE [LARGE SCALE GENOMIC DNA]</scope>
    <source>
        <strain>ATCC 27634 / DSM 579 / HB8</strain>
    </source>
</reference>
<reference key="2">
    <citation type="journal article" date="2000" name="Biol. Chem.">
        <title>Identification of the 50S ribosomal proteins from the eubacterium Thermus thermophilus.</title>
        <authorList>
            <person name="Katsani K.R."/>
            <person name="Tsiboli P."/>
            <person name="Anagnostopoulos K."/>
            <person name="Urlaub H."/>
            <person name="Choli-Papadopoulou T."/>
        </authorList>
    </citation>
    <scope>PROTEIN SEQUENCE OF 1-29</scope>
    <source>
        <strain>ATCC 27634 / DSM 579 / HB8</strain>
    </source>
</reference>
<reference key="3">
    <citation type="journal article" date="2005" name="Proteomics">
        <title>Extending ribosomal protein identifications to unsequenced bacterial strains using matrix-assisted laser desorption/ionization mass spectrometry.</title>
        <authorList>
            <person name="Suh M.-J."/>
            <person name="Hamburg D.M."/>
            <person name="Gregory S.T."/>
            <person name="Dahlberg A.E."/>
            <person name="Limbach P.A."/>
        </authorList>
    </citation>
    <scope>MASS SPECTROMETRY</scope>
    <source>
        <strain>ATCC 27634 / DSM 579 / HB8</strain>
    </source>
</reference>
<reference key="4">
    <citation type="journal article" date="2001" name="Cell">
        <title>The path of messenger RNA through the ribosome.</title>
        <authorList>
            <person name="Yusupova G.Z."/>
            <person name="Yusupov M.M."/>
            <person name="Cate J.H.D."/>
            <person name="Noller H.F."/>
        </authorList>
    </citation>
    <scope>X-RAY CRYSTALLOGRAPHY (5.0 ANGSTROMS) OF THE RIBOSOME</scope>
</reference>
<reference key="5">
    <citation type="journal article" date="2001" name="Science">
        <title>Crystal structure of the ribosome at 5.5 A resolution.</title>
        <authorList>
            <person name="Yusupov M.M."/>
            <person name="Yusupova G.Z."/>
            <person name="Baucom A."/>
            <person name="Lieberman K."/>
            <person name="Earnest T.N."/>
            <person name="Cate J.H.D."/>
            <person name="Noller H.F."/>
        </authorList>
    </citation>
    <scope>X-RAY CRYSTALLOGRAPHY (5.5 ANGSTROMS) OF THE RIBOSOME</scope>
    <scope>INTERSUBUNIT BRIDGE FORMATION</scope>
</reference>
<reference key="6">
    <citation type="journal article" date="2008" name="Science">
        <title>Insights into translational termination from the structure of RF2 bound to the ribosome.</title>
        <authorList>
            <person name="Weixlbaumer A."/>
            <person name="Jin H."/>
            <person name="Neubauer C."/>
            <person name="Voorhees R.M."/>
            <person name="Petry S."/>
            <person name="Kelley A.C."/>
            <person name="Ramakrishnan V."/>
        </authorList>
    </citation>
    <scope>X-RAY CRYSTALLOGRAPHY (3.45 ANGSTROMS) OF 70S RIBOSOME IN COMPLEX WITH RF2</scope>
    <scope>SUBUNIT</scope>
</reference>
<reference key="7">
    <citation type="journal article" date="2010" name="Proc. Natl. Acad. Sci. U.S.A.">
        <title>Structure of the 70S ribosome bound to release factor 2 and a substrate analog provides insights into catalysis of peptide release.</title>
        <authorList>
            <person name="Jin H."/>
            <person name="Kelley A.C."/>
            <person name="Loakes D."/>
            <person name="Ramakrishnan V."/>
        </authorList>
    </citation>
    <scope>X-RAY CRYSTALLOGRAPHY (3.10 ANGSTROMS) OF 70S RIBOSOME IN COMPLEX WITH RF2</scope>
    <scope>SUBUNIT</scope>
</reference>
<keyword id="KW-0002">3D-structure</keyword>
<keyword id="KW-0903">Direct protein sequencing</keyword>
<keyword id="KW-1185">Reference proteome</keyword>
<keyword id="KW-0687">Ribonucleoprotein</keyword>
<keyword id="KW-0689">Ribosomal protein</keyword>
<keyword id="KW-0694">RNA-binding</keyword>
<keyword id="KW-0699">rRNA-binding</keyword>